<feature type="chain" id="PRO_0000055174" description="Fanconi anemia group J protein homolog">
    <location>
        <begin position="1"/>
        <end position="1174"/>
    </location>
</feature>
<feature type="domain" description="Helicase ATP-binding" evidence="4">
    <location>
        <begin position="11"/>
        <end position="445"/>
    </location>
</feature>
<feature type="region of interest" description="Disordered" evidence="5">
    <location>
        <begin position="101"/>
        <end position="160"/>
    </location>
</feature>
<feature type="region of interest" description="Disordered" evidence="5">
    <location>
        <begin position="187"/>
        <end position="208"/>
    </location>
</feature>
<feature type="region of interest" description="Interaction with BRCA1" evidence="2">
    <location>
        <begin position="888"/>
        <end position="1063"/>
    </location>
</feature>
<feature type="region of interest" description="Disordered" evidence="5">
    <location>
        <begin position="923"/>
        <end position="1001"/>
    </location>
</feature>
<feature type="region of interest" description="Disordered" evidence="5">
    <location>
        <begin position="1102"/>
        <end position="1155"/>
    </location>
</feature>
<feature type="short sequence motif" description="Nuclear localization signal" evidence="3">
    <location>
        <begin position="158"/>
        <end position="175"/>
    </location>
</feature>
<feature type="short sequence motif" description="DEAH box">
    <location>
        <begin position="393"/>
        <end position="396"/>
    </location>
</feature>
<feature type="compositionally biased region" description="Polar residues" evidence="5">
    <location>
        <begin position="101"/>
        <end position="126"/>
    </location>
</feature>
<feature type="compositionally biased region" description="Low complexity" evidence="5">
    <location>
        <begin position="134"/>
        <end position="143"/>
    </location>
</feature>
<feature type="compositionally biased region" description="Polar residues" evidence="5">
    <location>
        <begin position="923"/>
        <end position="935"/>
    </location>
</feature>
<feature type="compositionally biased region" description="Polar residues" evidence="5">
    <location>
        <begin position="990"/>
        <end position="1001"/>
    </location>
</feature>
<feature type="compositionally biased region" description="Acidic residues" evidence="5">
    <location>
        <begin position="1138"/>
        <end position="1147"/>
    </location>
</feature>
<feature type="binding site" evidence="4">
    <location>
        <begin position="185"/>
        <end position="192"/>
    </location>
    <ligand>
        <name>ATP</name>
        <dbReference type="ChEBI" id="CHEBI:30616"/>
    </ligand>
</feature>
<feature type="binding site" evidence="1">
    <location>
        <position position="286"/>
    </location>
    <ligand>
        <name>[4Fe-4S] cluster</name>
        <dbReference type="ChEBI" id="CHEBI:49883"/>
    </ligand>
</feature>
<feature type="binding site" evidence="1">
    <location>
        <position position="301"/>
    </location>
    <ligand>
        <name>[4Fe-4S] cluster</name>
        <dbReference type="ChEBI" id="CHEBI:49883"/>
    </ligand>
</feature>
<feature type="binding site" evidence="1">
    <location>
        <position position="313"/>
    </location>
    <ligand>
        <name>[4Fe-4S] cluster</name>
        <dbReference type="ChEBI" id="CHEBI:49883"/>
    </ligand>
</feature>
<feature type="binding site" evidence="1">
    <location>
        <position position="353"/>
    </location>
    <ligand>
        <name>[4Fe-4S] cluster</name>
        <dbReference type="ChEBI" id="CHEBI:49883"/>
    </ligand>
</feature>
<feature type="modified residue" description="Phosphoserine" evidence="2">
    <location>
        <position position="929"/>
    </location>
</feature>
<feature type="modified residue" description="Phosphoserine" evidence="2">
    <location>
        <position position="932"/>
    </location>
</feature>
<feature type="modified residue" description="Phosphoserine" evidence="2">
    <location>
        <position position="994"/>
    </location>
</feature>
<feature type="modified residue" description="N6-acetyllysine" evidence="2">
    <location>
        <position position="1174"/>
    </location>
</feature>
<reference key="1">
    <citation type="journal article" date="2009" name="PLoS Biol.">
        <title>Lineage-specific biology revealed by a finished genome assembly of the mouse.</title>
        <authorList>
            <person name="Church D.M."/>
            <person name="Goodstadt L."/>
            <person name="Hillier L.W."/>
            <person name="Zody M.C."/>
            <person name="Goldstein S."/>
            <person name="She X."/>
            <person name="Bult C.J."/>
            <person name="Agarwala R."/>
            <person name="Cherry J.L."/>
            <person name="DiCuccio M."/>
            <person name="Hlavina W."/>
            <person name="Kapustin Y."/>
            <person name="Meric P."/>
            <person name="Maglott D."/>
            <person name="Birtle Z."/>
            <person name="Marques A.C."/>
            <person name="Graves T."/>
            <person name="Zhou S."/>
            <person name="Teague B."/>
            <person name="Potamousis K."/>
            <person name="Churas C."/>
            <person name="Place M."/>
            <person name="Herschleb J."/>
            <person name="Runnheim R."/>
            <person name="Forrest D."/>
            <person name="Amos-Landgraf J."/>
            <person name="Schwartz D.C."/>
            <person name="Cheng Z."/>
            <person name="Lindblad-Toh K."/>
            <person name="Eichler E.E."/>
            <person name="Ponting C.P."/>
        </authorList>
    </citation>
    <scope>NUCLEOTIDE SEQUENCE [LARGE SCALE GENOMIC DNA]</scope>
    <source>
        <strain>C57BL/6J</strain>
    </source>
</reference>
<reference key="2">
    <citation type="journal article" date="2004" name="Genome Res.">
        <title>The status, quality, and expansion of the NIH full-length cDNA project: the Mammalian Gene Collection (MGC).</title>
        <authorList>
            <consortium name="The MGC Project Team"/>
        </authorList>
    </citation>
    <scope>NUCLEOTIDE SEQUENCE [LARGE SCALE MRNA]</scope>
    <source>
        <strain>C57BL/6J</strain>
        <tissue>Brain</tissue>
    </source>
</reference>
<reference key="3">
    <citation type="journal article" date="2005" name="Science">
        <title>The transcriptional landscape of the mammalian genome.</title>
        <authorList>
            <person name="Carninci P."/>
            <person name="Kasukawa T."/>
            <person name="Katayama S."/>
            <person name="Gough J."/>
            <person name="Frith M.C."/>
            <person name="Maeda N."/>
            <person name="Oyama R."/>
            <person name="Ravasi T."/>
            <person name="Lenhard B."/>
            <person name="Wells C."/>
            <person name="Kodzius R."/>
            <person name="Shimokawa K."/>
            <person name="Bajic V.B."/>
            <person name="Brenner S.E."/>
            <person name="Batalov S."/>
            <person name="Forrest A.R."/>
            <person name="Zavolan M."/>
            <person name="Davis M.J."/>
            <person name="Wilming L.G."/>
            <person name="Aidinis V."/>
            <person name="Allen J.E."/>
            <person name="Ambesi-Impiombato A."/>
            <person name="Apweiler R."/>
            <person name="Aturaliya R.N."/>
            <person name="Bailey T.L."/>
            <person name="Bansal M."/>
            <person name="Baxter L."/>
            <person name="Beisel K.W."/>
            <person name="Bersano T."/>
            <person name="Bono H."/>
            <person name="Chalk A.M."/>
            <person name="Chiu K.P."/>
            <person name="Choudhary V."/>
            <person name="Christoffels A."/>
            <person name="Clutterbuck D.R."/>
            <person name="Crowe M.L."/>
            <person name="Dalla E."/>
            <person name="Dalrymple B.P."/>
            <person name="de Bono B."/>
            <person name="Della Gatta G."/>
            <person name="di Bernardo D."/>
            <person name="Down T."/>
            <person name="Engstrom P."/>
            <person name="Fagiolini M."/>
            <person name="Faulkner G."/>
            <person name="Fletcher C.F."/>
            <person name="Fukushima T."/>
            <person name="Furuno M."/>
            <person name="Futaki S."/>
            <person name="Gariboldi M."/>
            <person name="Georgii-Hemming P."/>
            <person name="Gingeras T.R."/>
            <person name="Gojobori T."/>
            <person name="Green R.E."/>
            <person name="Gustincich S."/>
            <person name="Harbers M."/>
            <person name="Hayashi Y."/>
            <person name="Hensch T.K."/>
            <person name="Hirokawa N."/>
            <person name="Hill D."/>
            <person name="Huminiecki L."/>
            <person name="Iacono M."/>
            <person name="Ikeo K."/>
            <person name="Iwama A."/>
            <person name="Ishikawa T."/>
            <person name="Jakt M."/>
            <person name="Kanapin A."/>
            <person name="Katoh M."/>
            <person name="Kawasawa Y."/>
            <person name="Kelso J."/>
            <person name="Kitamura H."/>
            <person name="Kitano H."/>
            <person name="Kollias G."/>
            <person name="Krishnan S.P."/>
            <person name="Kruger A."/>
            <person name="Kummerfeld S.K."/>
            <person name="Kurochkin I.V."/>
            <person name="Lareau L.F."/>
            <person name="Lazarevic D."/>
            <person name="Lipovich L."/>
            <person name="Liu J."/>
            <person name="Liuni S."/>
            <person name="McWilliam S."/>
            <person name="Madan Babu M."/>
            <person name="Madera M."/>
            <person name="Marchionni L."/>
            <person name="Matsuda H."/>
            <person name="Matsuzawa S."/>
            <person name="Miki H."/>
            <person name="Mignone F."/>
            <person name="Miyake S."/>
            <person name="Morris K."/>
            <person name="Mottagui-Tabar S."/>
            <person name="Mulder N."/>
            <person name="Nakano N."/>
            <person name="Nakauchi H."/>
            <person name="Ng P."/>
            <person name="Nilsson R."/>
            <person name="Nishiguchi S."/>
            <person name="Nishikawa S."/>
            <person name="Nori F."/>
            <person name="Ohara O."/>
            <person name="Okazaki Y."/>
            <person name="Orlando V."/>
            <person name="Pang K.C."/>
            <person name="Pavan W.J."/>
            <person name="Pavesi G."/>
            <person name="Pesole G."/>
            <person name="Petrovsky N."/>
            <person name="Piazza S."/>
            <person name="Reed J."/>
            <person name="Reid J.F."/>
            <person name="Ring B.Z."/>
            <person name="Ringwald M."/>
            <person name="Rost B."/>
            <person name="Ruan Y."/>
            <person name="Salzberg S.L."/>
            <person name="Sandelin A."/>
            <person name="Schneider C."/>
            <person name="Schoenbach C."/>
            <person name="Sekiguchi K."/>
            <person name="Semple C.A."/>
            <person name="Seno S."/>
            <person name="Sessa L."/>
            <person name="Sheng Y."/>
            <person name="Shibata Y."/>
            <person name="Shimada H."/>
            <person name="Shimada K."/>
            <person name="Silva D."/>
            <person name="Sinclair B."/>
            <person name="Sperling S."/>
            <person name="Stupka E."/>
            <person name="Sugiura K."/>
            <person name="Sultana R."/>
            <person name="Takenaka Y."/>
            <person name="Taki K."/>
            <person name="Tammoja K."/>
            <person name="Tan S.L."/>
            <person name="Tang S."/>
            <person name="Taylor M.S."/>
            <person name="Tegner J."/>
            <person name="Teichmann S.A."/>
            <person name="Ueda H.R."/>
            <person name="van Nimwegen E."/>
            <person name="Verardo R."/>
            <person name="Wei C.L."/>
            <person name="Yagi K."/>
            <person name="Yamanishi H."/>
            <person name="Zabarovsky E."/>
            <person name="Zhu S."/>
            <person name="Zimmer A."/>
            <person name="Hide W."/>
            <person name="Bult C."/>
            <person name="Grimmond S.M."/>
            <person name="Teasdale R.D."/>
            <person name="Liu E.T."/>
            <person name="Brusic V."/>
            <person name="Quackenbush J."/>
            <person name="Wahlestedt C."/>
            <person name="Mattick J.S."/>
            <person name="Hume D.A."/>
            <person name="Kai C."/>
            <person name="Sasaki D."/>
            <person name="Tomaru Y."/>
            <person name="Fukuda S."/>
            <person name="Kanamori-Katayama M."/>
            <person name="Suzuki M."/>
            <person name="Aoki J."/>
            <person name="Arakawa T."/>
            <person name="Iida J."/>
            <person name="Imamura K."/>
            <person name="Itoh M."/>
            <person name="Kato T."/>
            <person name="Kawaji H."/>
            <person name="Kawagashira N."/>
            <person name="Kawashima T."/>
            <person name="Kojima M."/>
            <person name="Kondo S."/>
            <person name="Konno H."/>
            <person name="Nakano K."/>
            <person name="Ninomiya N."/>
            <person name="Nishio T."/>
            <person name="Okada M."/>
            <person name="Plessy C."/>
            <person name="Shibata K."/>
            <person name="Shiraki T."/>
            <person name="Suzuki S."/>
            <person name="Tagami M."/>
            <person name="Waki K."/>
            <person name="Watahiki A."/>
            <person name="Okamura-Oho Y."/>
            <person name="Suzuki H."/>
            <person name="Kawai J."/>
            <person name="Hayashizaki Y."/>
        </authorList>
    </citation>
    <scope>NUCLEOTIDE SEQUENCE [LARGE SCALE MRNA] OF 1-577 AND 754-1174</scope>
    <source>
        <strain>C57BL/6J</strain>
        <tissue>Embryo</tissue>
        <tissue>Eye</tissue>
    </source>
</reference>
<proteinExistence type="evidence at transcript level"/>
<dbReference type="EC" id="5.6.2.3" evidence="2"/>
<dbReference type="EMBL" id="AL592065">
    <property type="status" value="NOT_ANNOTATED_CDS"/>
    <property type="molecule type" value="Genomic_DNA"/>
</dbReference>
<dbReference type="EMBL" id="AL592465">
    <property type="status" value="NOT_ANNOTATED_CDS"/>
    <property type="molecule type" value="Genomic_DNA"/>
</dbReference>
<dbReference type="EMBL" id="AL645690">
    <property type="status" value="NOT_ANNOTATED_CDS"/>
    <property type="molecule type" value="Genomic_DNA"/>
</dbReference>
<dbReference type="EMBL" id="BC094252">
    <property type="protein sequence ID" value="AAH94252.1"/>
    <property type="molecule type" value="mRNA"/>
</dbReference>
<dbReference type="EMBL" id="AK051878">
    <property type="protein sequence ID" value="BAC34798.2"/>
    <property type="molecule type" value="mRNA"/>
</dbReference>
<dbReference type="EMBL" id="AK080771">
    <property type="protein sequence ID" value="BAC38016.1"/>
    <property type="molecule type" value="mRNA"/>
</dbReference>
<dbReference type="CCDS" id="CCDS25197.1"/>
<dbReference type="RefSeq" id="NP_840094.1">
    <property type="nucleotide sequence ID" value="NM_178309.2"/>
</dbReference>
<dbReference type="RefSeq" id="XP_006533302.1">
    <property type="nucleotide sequence ID" value="XM_006533239.2"/>
</dbReference>
<dbReference type="SMR" id="Q5SXJ3"/>
<dbReference type="BioGRID" id="231925">
    <property type="interactions" value="1"/>
</dbReference>
<dbReference type="ComplexPortal" id="CPX-4721">
    <property type="entry name" value="BRCA1-B complex"/>
</dbReference>
<dbReference type="FunCoup" id="Q5SXJ3">
    <property type="interactions" value="2502"/>
</dbReference>
<dbReference type="IntAct" id="Q5SXJ3">
    <property type="interactions" value="1"/>
</dbReference>
<dbReference type="STRING" id="10090.ENSMUSP00000043108"/>
<dbReference type="GlyGen" id="Q5SXJ3">
    <property type="glycosylation" value="1 site"/>
</dbReference>
<dbReference type="iPTMnet" id="Q5SXJ3"/>
<dbReference type="PhosphoSitePlus" id="Q5SXJ3"/>
<dbReference type="jPOST" id="Q5SXJ3"/>
<dbReference type="PaxDb" id="10090-ENSMUSP00000043108"/>
<dbReference type="PeptideAtlas" id="Q5SXJ3"/>
<dbReference type="ProteomicsDB" id="277041"/>
<dbReference type="Pumba" id="Q5SXJ3"/>
<dbReference type="Antibodypedia" id="18594">
    <property type="antibodies" value="307 antibodies from 36 providers"/>
</dbReference>
<dbReference type="DNASU" id="237911"/>
<dbReference type="Ensembl" id="ENSMUST00000044423.4">
    <property type="protein sequence ID" value="ENSMUSP00000043108.4"/>
    <property type="gene ID" value="ENSMUSG00000034329.17"/>
</dbReference>
<dbReference type="GeneID" id="237911"/>
<dbReference type="KEGG" id="mmu:237911"/>
<dbReference type="UCSC" id="uc007ksf.2">
    <property type="organism name" value="mouse"/>
</dbReference>
<dbReference type="AGR" id="MGI:2442836"/>
<dbReference type="CTD" id="83990"/>
<dbReference type="MGI" id="MGI:2442836">
    <property type="gene designation" value="Brip1"/>
</dbReference>
<dbReference type="VEuPathDB" id="HostDB:ENSMUSG00000034329"/>
<dbReference type="eggNOG" id="KOG1132">
    <property type="taxonomic scope" value="Eukaryota"/>
</dbReference>
<dbReference type="GeneTree" id="ENSGT00950000182970"/>
<dbReference type="HOGENOM" id="CLU_006515_1_0_1"/>
<dbReference type="InParanoid" id="Q5SXJ3"/>
<dbReference type="OMA" id="FSNDNAR"/>
<dbReference type="OrthoDB" id="19182at2759"/>
<dbReference type="PhylomeDB" id="Q5SXJ3"/>
<dbReference type="TreeFam" id="TF329449"/>
<dbReference type="Reactome" id="R-MMU-5685938">
    <property type="pathway name" value="HDR through Single Strand Annealing (SSA)"/>
</dbReference>
<dbReference type="Reactome" id="R-MMU-5685942">
    <property type="pathway name" value="HDR through Homologous Recombination (HRR)"/>
</dbReference>
<dbReference type="Reactome" id="R-MMU-5693568">
    <property type="pathway name" value="Resolution of D-loop Structures through Holliday Junction Intermediates"/>
</dbReference>
<dbReference type="Reactome" id="R-MMU-5693579">
    <property type="pathway name" value="Homologous DNA Pairing and Strand Exchange"/>
</dbReference>
<dbReference type="Reactome" id="R-MMU-5693607">
    <property type="pathway name" value="Processing of DNA double-strand break ends"/>
</dbReference>
<dbReference type="Reactome" id="R-MMU-5693616">
    <property type="pathway name" value="Presynaptic phase of homologous DNA pairing and strand exchange"/>
</dbReference>
<dbReference type="Reactome" id="R-MMU-6804756">
    <property type="pathway name" value="Regulation of TP53 Activity through Phosphorylation"/>
</dbReference>
<dbReference type="Reactome" id="R-MMU-69473">
    <property type="pathway name" value="G2/M DNA damage checkpoint"/>
</dbReference>
<dbReference type="BioGRID-ORCS" id="237911">
    <property type="hits" value="9 hits in 114 CRISPR screens"/>
</dbReference>
<dbReference type="ChiTaRS" id="Brip1">
    <property type="organism name" value="mouse"/>
</dbReference>
<dbReference type="PRO" id="PR:Q5SXJ3"/>
<dbReference type="Proteomes" id="UP000000589">
    <property type="component" value="Chromosome 11"/>
</dbReference>
<dbReference type="RNAct" id="Q5SXJ3">
    <property type="molecule type" value="protein"/>
</dbReference>
<dbReference type="Bgee" id="ENSMUSG00000034329">
    <property type="expression patterns" value="Expressed in animal zygote and 107 other cell types or tissues"/>
</dbReference>
<dbReference type="GO" id="GO:0070532">
    <property type="term" value="C:BRCA1-B complex"/>
    <property type="evidence" value="ECO:0000266"/>
    <property type="project" value="ComplexPortal"/>
</dbReference>
<dbReference type="GO" id="GO:0005737">
    <property type="term" value="C:cytoplasm"/>
    <property type="evidence" value="ECO:0000250"/>
    <property type="project" value="UniProtKB"/>
</dbReference>
<dbReference type="GO" id="GO:0031965">
    <property type="term" value="C:nuclear membrane"/>
    <property type="evidence" value="ECO:0007669"/>
    <property type="project" value="Ensembl"/>
</dbReference>
<dbReference type="GO" id="GO:0005654">
    <property type="term" value="C:nucleoplasm"/>
    <property type="evidence" value="ECO:0007669"/>
    <property type="project" value="Ensembl"/>
</dbReference>
<dbReference type="GO" id="GO:0005634">
    <property type="term" value="C:nucleus"/>
    <property type="evidence" value="ECO:0000250"/>
    <property type="project" value="UniProtKB"/>
</dbReference>
<dbReference type="GO" id="GO:0005657">
    <property type="term" value="C:replication fork"/>
    <property type="evidence" value="ECO:0007669"/>
    <property type="project" value="Ensembl"/>
</dbReference>
<dbReference type="GO" id="GO:0051539">
    <property type="term" value="F:4 iron, 4 sulfur cluster binding"/>
    <property type="evidence" value="ECO:0007669"/>
    <property type="project" value="UniProtKB-KW"/>
</dbReference>
<dbReference type="GO" id="GO:0043139">
    <property type="term" value="F:5'-3' DNA helicase activity"/>
    <property type="evidence" value="ECO:0000250"/>
    <property type="project" value="UniProtKB"/>
</dbReference>
<dbReference type="GO" id="GO:0005524">
    <property type="term" value="F:ATP binding"/>
    <property type="evidence" value="ECO:0007669"/>
    <property type="project" value="UniProtKB-KW"/>
</dbReference>
<dbReference type="GO" id="GO:0016887">
    <property type="term" value="F:ATP hydrolysis activity"/>
    <property type="evidence" value="ECO:0007669"/>
    <property type="project" value="RHEA"/>
</dbReference>
<dbReference type="GO" id="GO:0003677">
    <property type="term" value="F:DNA binding"/>
    <property type="evidence" value="ECO:0007669"/>
    <property type="project" value="InterPro"/>
</dbReference>
<dbReference type="GO" id="GO:0046872">
    <property type="term" value="F:metal ion binding"/>
    <property type="evidence" value="ECO:0007669"/>
    <property type="project" value="UniProtKB-KW"/>
</dbReference>
<dbReference type="GO" id="GO:0003724">
    <property type="term" value="F:RNA helicase activity"/>
    <property type="evidence" value="ECO:0007669"/>
    <property type="project" value="UniProtKB-EC"/>
</dbReference>
<dbReference type="GO" id="GO:0051026">
    <property type="term" value="P:chiasma assembly"/>
    <property type="evidence" value="ECO:0000315"/>
    <property type="project" value="MGI"/>
</dbReference>
<dbReference type="GO" id="GO:0006281">
    <property type="term" value="P:DNA repair"/>
    <property type="evidence" value="ECO:0000303"/>
    <property type="project" value="ComplexPortal"/>
</dbReference>
<dbReference type="GO" id="GO:1990918">
    <property type="term" value="P:double-strand break repair involved in meiotic recombination"/>
    <property type="evidence" value="ECO:0000315"/>
    <property type="project" value="MGI"/>
</dbReference>
<dbReference type="GO" id="GO:0007129">
    <property type="term" value="P:homologous chromosome pairing at meiosis"/>
    <property type="evidence" value="ECO:0000315"/>
    <property type="project" value="MGI"/>
</dbReference>
<dbReference type="GO" id="GO:0035825">
    <property type="term" value="P:homologous recombination"/>
    <property type="evidence" value="ECO:0000303"/>
    <property type="project" value="ComplexPortal"/>
</dbReference>
<dbReference type="GO" id="GO:0008584">
    <property type="term" value="P:male gonad development"/>
    <property type="evidence" value="ECO:0000315"/>
    <property type="project" value="MGI"/>
</dbReference>
<dbReference type="GO" id="GO:0010705">
    <property type="term" value="P:meiotic DNA double-strand break processing involved in reciprocal meiotic recombination"/>
    <property type="evidence" value="ECO:0000315"/>
    <property type="project" value="MGI"/>
</dbReference>
<dbReference type="GO" id="GO:0106300">
    <property type="term" value="P:protein-DNA covalent cross-linking repair"/>
    <property type="evidence" value="ECO:0000250"/>
    <property type="project" value="UniProtKB"/>
</dbReference>
<dbReference type="GO" id="GO:0006357">
    <property type="term" value="P:regulation of transcription by RNA polymerase II"/>
    <property type="evidence" value="ECO:0000266"/>
    <property type="project" value="MGI"/>
</dbReference>
<dbReference type="GO" id="GO:0072520">
    <property type="term" value="P:seminiferous tubule development"/>
    <property type="evidence" value="ECO:0000315"/>
    <property type="project" value="MGI"/>
</dbReference>
<dbReference type="GO" id="GO:0007286">
    <property type="term" value="P:spermatid development"/>
    <property type="evidence" value="ECO:0000315"/>
    <property type="project" value="MGI"/>
</dbReference>
<dbReference type="GO" id="GO:0007283">
    <property type="term" value="P:spermatogenesis"/>
    <property type="evidence" value="ECO:0000315"/>
    <property type="project" value="MGI"/>
</dbReference>
<dbReference type="GO" id="GO:0007284">
    <property type="term" value="P:spermatogonial cell division"/>
    <property type="evidence" value="ECO:0000315"/>
    <property type="project" value="MGI"/>
</dbReference>
<dbReference type="CDD" id="cd18788">
    <property type="entry name" value="SF2_C_XPD"/>
    <property type="match status" value="1"/>
</dbReference>
<dbReference type="FunFam" id="3.40.50.300:FF:000977">
    <property type="entry name" value="BRCA1 interacting protein C-terminal helicase 1"/>
    <property type="match status" value="1"/>
</dbReference>
<dbReference type="FunFam" id="3.40.50.300:FF:001680">
    <property type="entry name" value="BRCA1 interacting protein C-terminal helicase 1"/>
    <property type="match status" value="1"/>
</dbReference>
<dbReference type="FunFam" id="3.40.50.300:FF:000731">
    <property type="entry name" value="Fanconi anemia group J protein homolog"/>
    <property type="match status" value="1"/>
</dbReference>
<dbReference type="Gene3D" id="3.40.50.300">
    <property type="entry name" value="P-loop containing nucleotide triphosphate hydrolases"/>
    <property type="match status" value="3"/>
</dbReference>
<dbReference type="InterPro" id="IPR006555">
    <property type="entry name" value="ATP-dep_Helicase_C"/>
</dbReference>
<dbReference type="InterPro" id="IPR045028">
    <property type="entry name" value="DinG/Rad3-like"/>
</dbReference>
<dbReference type="InterPro" id="IPR014013">
    <property type="entry name" value="Helic_SF1/SF2_ATP-bd_DinG/Rad3"/>
</dbReference>
<dbReference type="InterPro" id="IPR006554">
    <property type="entry name" value="Helicase-like_DEXD_c2"/>
</dbReference>
<dbReference type="InterPro" id="IPR014001">
    <property type="entry name" value="Helicase_ATP-bd"/>
</dbReference>
<dbReference type="InterPro" id="IPR027417">
    <property type="entry name" value="P-loop_NTPase"/>
</dbReference>
<dbReference type="InterPro" id="IPR010614">
    <property type="entry name" value="RAD3-like_helicase_DEAD"/>
</dbReference>
<dbReference type="InterPro" id="IPR013020">
    <property type="entry name" value="Rad3/Chl1-like"/>
</dbReference>
<dbReference type="NCBIfam" id="TIGR00604">
    <property type="entry name" value="rad3"/>
    <property type="match status" value="1"/>
</dbReference>
<dbReference type="PANTHER" id="PTHR11472">
    <property type="entry name" value="DNA REPAIR DEAD HELICASE RAD3/XP-D SUBFAMILY MEMBER"/>
    <property type="match status" value="1"/>
</dbReference>
<dbReference type="PANTHER" id="PTHR11472:SF47">
    <property type="entry name" value="FANCONI ANEMIA GROUP J PROTEIN"/>
    <property type="match status" value="1"/>
</dbReference>
<dbReference type="Pfam" id="PF06733">
    <property type="entry name" value="DEAD_2"/>
    <property type="match status" value="1"/>
</dbReference>
<dbReference type="Pfam" id="PF13307">
    <property type="entry name" value="Helicase_C_2"/>
    <property type="match status" value="1"/>
</dbReference>
<dbReference type="SMART" id="SM00487">
    <property type="entry name" value="DEXDc"/>
    <property type="match status" value="1"/>
</dbReference>
<dbReference type="SMART" id="SM00488">
    <property type="entry name" value="DEXDc2"/>
    <property type="match status" value="1"/>
</dbReference>
<dbReference type="SMART" id="SM00491">
    <property type="entry name" value="HELICc2"/>
    <property type="match status" value="1"/>
</dbReference>
<dbReference type="SUPFAM" id="SSF52540">
    <property type="entry name" value="P-loop containing nucleoside triphosphate hydrolases"/>
    <property type="match status" value="2"/>
</dbReference>
<dbReference type="PROSITE" id="PS51193">
    <property type="entry name" value="HELICASE_ATP_BIND_2"/>
    <property type="match status" value="1"/>
</dbReference>
<protein>
    <recommendedName>
        <fullName evidence="6">Fanconi anemia group J protein homolog</fullName>
        <ecNumber evidence="2">5.6.2.3</ecNumber>
    </recommendedName>
    <alternativeName>
        <fullName>BRCA1-associated C-terminal helicase 1</fullName>
    </alternativeName>
    <alternativeName>
        <fullName>BRCA1-interacting protein C-terminal helicase 1</fullName>
        <shortName>BRCA1-interacting protein 1</shortName>
    </alternativeName>
    <alternativeName>
        <fullName evidence="6">DNA 5'-3' helicase FANCJ</fullName>
    </alternativeName>
</protein>
<organism>
    <name type="scientific">Mus musculus</name>
    <name type="common">Mouse</name>
    <dbReference type="NCBI Taxonomy" id="10090"/>
    <lineage>
        <taxon>Eukaryota</taxon>
        <taxon>Metazoa</taxon>
        <taxon>Chordata</taxon>
        <taxon>Craniata</taxon>
        <taxon>Vertebrata</taxon>
        <taxon>Euteleostomi</taxon>
        <taxon>Mammalia</taxon>
        <taxon>Eutheria</taxon>
        <taxon>Euarchontoglires</taxon>
        <taxon>Glires</taxon>
        <taxon>Rodentia</taxon>
        <taxon>Myomorpha</taxon>
        <taxon>Muroidea</taxon>
        <taxon>Muridae</taxon>
        <taxon>Murinae</taxon>
        <taxon>Mus</taxon>
        <taxon>Mus</taxon>
    </lineage>
</organism>
<accession>Q5SXJ3</accession>
<accession>Q8BJQ8</accession>
<accession>Q8BKI6</accession>
<comment type="function">
    <text evidence="2">DNA-dependent helicase and 5' to 3' DNA helicase required for the maintenance of chromosomal stability. Acts late in the Fanconi anemia pathway, after FANCD2 ubiquitination. Involved in the repair of DNA double-strand breaks by homologous recombination in a manner that depends on its association with BRCA1. Involved in the repair of abasic sites at replication forks by promoting the degradation of DNA-protein cross-links: acts by catalyzing unfolding of HMCES DNA-protein cross-link via its helicase activity, exposing the underlying DNA and enabling cleavage of the DNA-protein adduct by the SPRTN metalloprotease. Can unwind RNA:DNA hybrids and G-quadruplex DNA.</text>
</comment>
<comment type="catalytic activity">
    <reaction evidence="2">
        <text>Couples ATP hydrolysis with the unwinding of duplex DNA at the replication fork by translocating in the 5'-3' direction. This creates two antiparallel DNA single strands (ssDNA). The leading ssDNA polymer is the template for DNA polymerase III holoenzyme which synthesizes a continuous strand.</text>
        <dbReference type="EC" id="5.6.2.3"/>
    </reaction>
</comment>
<comment type="catalytic activity">
    <reaction evidence="2">
        <text>ATP + H2O = ADP + phosphate + H(+)</text>
        <dbReference type="Rhea" id="RHEA:13065"/>
        <dbReference type="ChEBI" id="CHEBI:15377"/>
        <dbReference type="ChEBI" id="CHEBI:15378"/>
        <dbReference type="ChEBI" id="CHEBI:30616"/>
        <dbReference type="ChEBI" id="CHEBI:43474"/>
        <dbReference type="ChEBI" id="CHEBI:456216"/>
        <dbReference type="EC" id="5.6.2.3"/>
    </reaction>
</comment>
<comment type="cofactor">
    <cofactor evidence="2">
        <name>[4Fe-4S] cluster</name>
        <dbReference type="ChEBI" id="CHEBI:49883"/>
    </cofactor>
    <text evidence="2">Binds 1 [4Fe-4S] cluster.</text>
</comment>
<comment type="subunit">
    <text evidence="2">Binds directly to the BRCT domains of BRCA1. Interacts with the CIA complex components CIAO1, CIAO2B and MMS19.</text>
</comment>
<comment type="subcellular location">
    <subcellularLocation>
        <location evidence="2">Nucleus</location>
    </subcellularLocation>
    <subcellularLocation>
        <location evidence="2">Cytoplasm</location>
    </subcellularLocation>
</comment>
<comment type="PTM">
    <text evidence="2">Phosphorylated. Phosphorylation is necessary for interaction with BRCA1, and is cell-cycle regulated.</text>
</comment>
<comment type="similarity">
    <text evidence="6">Belongs to the DEAD box helicase family. DEAH subfamily.</text>
</comment>
<evidence type="ECO:0000250" key="1">
    <source>
        <dbReference type="UniProtKB" id="Q4JC68"/>
    </source>
</evidence>
<evidence type="ECO:0000250" key="2">
    <source>
        <dbReference type="UniProtKB" id="Q9BX63"/>
    </source>
</evidence>
<evidence type="ECO:0000255" key="3"/>
<evidence type="ECO:0000255" key="4">
    <source>
        <dbReference type="PROSITE-ProRule" id="PRU00541"/>
    </source>
</evidence>
<evidence type="ECO:0000256" key="5">
    <source>
        <dbReference type="SAM" id="MobiDB-lite"/>
    </source>
</evidence>
<evidence type="ECO:0000305" key="6"/>
<evidence type="ECO:0000312" key="7">
    <source>
        <dbReference type="MGI" id="MGI:2442836"/>
    </source>
</evidence>
<sequence length="1174" mass="131360">MSSVLSDYTIGGVKIHFPCRAYPAQLAMMNSIVRGLNSSQHCLLESPTGSGKSLALLCSALAWQQSLSEKPVDEGLNKKPEAPPSCSCACHSKNFTYSDTNLDTSPHFNSPSKPSSGRNGVSTPCQDSPEKNTLAAKLSAKKQASIHRDEDDDFQVEKKRIRPLETTQQIRKRHCLEKDVHHVDARLASEKRVKPESPIGKSFSDRKDSFQNVDGLCSRCCCSAKQGNNQEPANTVKKDHGGQCKRPKIYFGTRTHKQIAQITRELRKTAYSGVPMTILSSRDHSCVHPEVVGNFNRKEKCMELLDGKHGKSCYFYHGVHKISNQQTLQHLQGMSRAWDIEELVSLGRKLKACPYYTARELIEDADIVFCPYNYLLDSQIRETMDIKLKGQVVILDEAHNIEDCARESASYSVTEVQLRFARDELDSLINGNIRKKSHEPLRDVCYNLINWLETNSKHLVERGYESSCKIWSGNEMLLNLYRMGITTATFPVLQRHLSAVLQKEEKVTPIHGKEEAIQIPIISASTQVVLKGLFMVLDYLFRENSRFADDYKVAIQQTYSWTNQIAIFDKTGVLAVPKNKKHSRQKIGVNALNFWCLNPAVAFSDINDKVRTIVLTSGTLSPLKSFSSELGVTFSIQLEANHVISNSQVWVGTVGSGPKGRNLCATFQHTETFEFQDEVGMLLLSVCQTVSQGILCFLPSYKLLEKLRERWIFTGLWHSLESVKTVIAEPQGGEKTDFDELLQVYYDAIKFKGEKDGALLIAVCRGKVSEGLDFSDDNARAVITVGIPFPNVKDLQVELKRQYNDHHSKSRGLLPGRQWYEIQAYRALNQALGRCIRHKNDWGALILVDDRFNNNPNRYISGLSKWVRQQIQHHSSFASALESLTEFSRRHQKVTNRSKKDEKCTKDNEPTLEVACLEDSTFTSVSESSHQSPENSTEEAEVCVQELQCPQVATKSPSVASHGVSRRKKSDPGLRGESLQTMKTEKNEISRSSSPTFGKQTEPVNWPIFNSLRRHFNSKVKNCTPVLKSSKNRAPGSSTFNKTALPLTGNCVPSNETADTSLGPCLQSEVIISPVKIEATPATNYSKQVFCCEKDLLPDTELSPGTEEAKCPSSNKAAETEVDDDSECFTPELFDPVDTNEENGELVETDRSSHSSDCFSAEELFETATGFGQK</sequence>
<gene>
    <name evidence="7" type="primary">Brip1</name>
    <name type="synonym">Bach1</name>
    <name type="synonym">Fancj</name>
</gene>
<name>FANCJ_MOUSE</name>
<keyword id="KW-0004">4Fe-4S</keyword>
<keyword id="KW-0007">Acetylation</keyword>
<keyword id="KW-0067">ATP-binding</keyword>
<keyword id="KW-0963">Cytoplasm</keyword>
<keyword id="KW-0227">DNA damage</keyword>
<keyword id="KW-0234">DNA repair</keyword>
<keyword id="KW-0347">Helicase</keyword>
<keyword id="KW-0378">Hydrolase</keyword>
<keyword id="KW-0408">Iron</keyword>
<keyword id="KW-0411">Iron-sulfur</keyword>
<keyword id="KW-0413">Isomerase</keyword>
<keyword id="KW-0479">Metal-binding</keyword>
<keyword id="KW-0547">Nucleotide-binding</keyword>
<keyword id="KW-0539">Nucleus</keyword>
<keyword id="KW-0597">Phosphoprotein</keyword>
<keyword id="KW-1185">Reference proteome</keyword>